<feature type="chain" id="PRO_1000065604" description="tRNA(Ile)-lysidine synthase">
    <location>
        <begin position="1"/>
        <end position="448"/>
    </location>
</feature>
<feature type="binding site" evidence="1">
    <location>
        <begin position="25"/>
        <end position="30"/>
    </location>
    <ligand>
        <name>ATP</name>
        <dbReference type="ChEBI" id="CHEBI:30616"/>
    </ligand>
</feature>
<reference key="1">
    <citation type="journal article" date="2005" name="Infect. Immun.">
        <title>Whole-genome analyses of speciation events in pathogenic Brucellae.</title>
        <authorList>
            <person name="Chain P.S."/>
            <person name="Comerci D.J."/>
            <person name="Tolmasky M.E."/>
            <person name="Larimer F.W."/>
            <person name="Malfatti S.A."/>
            <person name="Vergez L.M."/>
            <person name="Aguero F."/>
            <person name="Land M.L."/>
            <person name="Ugalde R.A."/>
            <person name="Garcia E."/>
        </authorList>
    </citation>
    <scope>NUCLEOTIDE SEQUENCE [LARGE SCALE GENOMIC DNA]</scope>
    <source>
        <strain>2308</strain>
    </source>
</reference>
<evidence type="ECO:0000255" key="1">
    <source>
        <dbReference type="HAMAP-Rule" id="MF_01161"/>
    </source>
</evidence>
<name>TILS_BRUA2</name>
<keyword id="KW-0067">ATP-binding</keyword>
<keyword id="KW-0963">Cytoplasm</keyword>
<keyword id="KW-0436">Ligase</keyword>
<keyword id="KW-0547">Nucleotide-binding</keyword>
<keyword id="KW-1185">Reference proteome</keyword>
<keyword id="KW-0819">tRNA processing</keyword>
<protein>
    <recommendedName>
        <fullName evidence="1">tRNA(Ile)-lysidine synthase</fullName>
        <ecNumber evidence="1">6.3.4.19</ecNumber>
    </recommendedName>
    <alternativeName>
        <fullName evidence="1">tRNA(Ile)-2-lysyl-cytidine synthase</fullName>
    </alternativeName>
    <alternativeName>
        <fullName evidence="1">tRNA(Ile)-lysidine synthetase</fullName>
    </alternativeName>
</protein>
<dbReference type="EC" id="6.3.4.19" evidence="1"/>
<dbReference type="EMBL" id="AM040264">
    <property type="protein sequence ID" value="CAJ11660.1"/>
    <property type="molecule type" value="Genomic_DNA"/>
</dbReference>
<dbReference type="RefSeq" id="WP_002967893.1">
    <property type="nucleotide sequence ID" value="NZ_KN046823.1"/>
</dbReference>
<dbReference type="SMR" id="Q2YQH6"/>
<dbReference type="STRING" id="359391.BAB1_1704"/>
<dbReference type="GeneID" id="93017943"/>
<dbReference type="KEGG" id="bmf:BAB1_1704"/>
<dbReference type="PATRIC" id="fig|359391.11.peg.219"/>
<dbReference type="HOGENOM" id="CLU_018869_3_3_5"/>
<dbReference type="PhylomeDB" id="Q2YQH6"/>
<dbReference type="Proteomes" id="UP000002719">
    <property type="component" value="Chromosome I"/>
</dbReference>
<dbReference type="GO" id="GO:0005737">
    <property type="term" value="C:cytoplasm"/>
    <property type="evidence" value="ECO:0007669"/>
    <property type="project" value="UniProtKB-SubCell"/>
</dbReference>
<dbReference type="GO" id="GO:0005524">
    <property type="term" value="F:ATP binding"/>
    <property type="evidence" value="ECO:0007669"/>
    <property type="project" value="UniProtKB-UniRule"/>
</dbReference>
<dbReference type="GO" id="GO:0032267">
    <property type="term" value="F:tRNA(Ile)-lysidine synthase activity"/>
    <property type="evidence" value="ECO:0007669"/>
    <property type="project" value="UniProtKB-EC"/>
</dbReference>
<dbReference type="GO" id="GO:0006400">
    <property type="term" value="P:tRNA modification"/>
    <property type="evidence" value="ECO:0007669"/>
    <property type="project" value="UniProtKB-UniRule"/>
</dbReference>
<dbReference type="CDD" id="cd01992">
    <property type="entry name" value="TilS_N"/>
    <property type="match status" value="1"/>
</dbReference>
<dbReference type="Gene3D" id="3.40.50.620">
    <property type="entry name" value="HUPs"/>
    <property type="match status" value="1"/>
</dbReference>
<dbReference type="HAMAP" id="MF_01161">
    <property type="entry name" value="tRNA_Ile_lys_synt"/>
    <property type="match status" value="1"/>
</dbReference>
<dbReference type="InterPro" id="IPR014729">
    <property type="entry name" value="Rossmann-like_a/b/a_fold"/>
</dbReference>
<dbReference type="InterPro" id="IPR011063">
    <property type="entry name" value="TilS/TtcA_N"/>
</dbReference>
<dbReference type="InterPro" id="IPR012094">
    <property type="entry name" value="tRNA_Ile_lys_synt"/>
</dbReference>
<dbReference type="InterPro" id="IPR012795">
    <property type="entry name" value="tRNA_Ile_lys_synt_N"/>
</dbReference>
<dbReference type="NCBIfam" id="TIGR02432">
    <property type="entry name" value="lysidine_TilS_N"/>
    <property type="match status" value="1"/>
</dbReference>
<dbReference type="PANTHER" id="PTHR43033">
    <property type="entry name" value="TRNA(ILE)-LYSIDINE SYNTHASE-RELATED"/>
    <property type="match status" value="1"/>
</dbReference>
<dbReference type="PANTHER" id="PTHR43033:SF1">
    <property type="entry name" value="TRNA(ILE)-LYSIDINE SYNTHASE-RELATED"/>
    <property type="match status" value="1"/>
</dbReference>
<dbReference type="Pfam" id="PF01171">
    <property type="entry name" value="ATP_bind_3"/>
    <property type="match status" value="1"/>
</dbReference>
<dbReference type="SUPFAM" id="SSF52402">
    <property type="entry name" value="Adenine nucleotide alpha hydrolases-like"/>
    <property type="match status" value="1"/>
</dbReference>
<comment type="function">
    <text evidence="1">Ligates lysine onto the cytidine present at position 34 of the AUA codon-specific tRNA(Ile) that contains the anticodon CAU, in an ATP-dependent manner. Cytidine is converted to lysidine, thus changing the amino acid specificity of the tRNA from methionine to isoleucine.</text>
</comment>
<comment type="catalytic activity">
    <reaction evidence="1">
        <text>cytidine(34) in tRNA(Ile2) + L-lysine + ATP = lysidine(34) in tRNA(Ile2) + AMP + diphosphate + H(+)</text>
        <dbReference type="Rhea" id="RHEA:43744"/>
        <dbReference type="Rhea" id="RHEA-COMP:10625"/>
        <dbReference type="Rhea" id="RHEA-COMP:10670"/>
        <dbReference type="ChEBI" id="CHEBI:15378"/>
        <dbReference type="ChEBI" id="CHEBI:30616"/>
        <dbReference type="ChEBI" id="CHEBI:32551"/>
        <dbReference type="ChEBI" id="CHEBI:33019"/>
        <dbReference type="ChEBI" id="CHEBI:82748"/>
        <dbReference type="ChEBI" id="CHEBI:83665"/>
        <dbReference type="ChEBI" id="CHEBI:456215"/>
        <dbReference type="EC" id="6.3.4.19"/>
    </reaction>
</comment>
<comment type="subcellular location">
    <subcellularLocation>
        <location evidence="1">Cytoplasm</location>
    </subcellularLocation>
</comment>
<comment type="domain">
    <text>The N-terminal region contains the highly conserved SGGXDS motif, predicted to be a P-loop motif involved in ATP binding.</text>
</comment>
<comment type="similarity">
    <text evidence="1">Belongs to the tRNA(Ile)-lysidine synthase family.</text>
</comment>
<organism>
    <name type="scientific">Brucella abortus (strain 2308)</name>
    <dbReference type="NCBI Taxonomy" id="359391"/>
    <lineage>
        <taxon>Bacteria</taxon>
        <taxon>Pseudomonadati</taxon>
        <taxon>Pseudomonadota</taxon>
        <taxon>Alphaproteobacteria</taxon>
        <taxon>Hyphomicrobiales</taxon>
        <taxon>Brucellaceae</taxon>
        <taxon>Brucella/Ochrobactrum group</taxon>
        <taxon>Brucella</taxon>
    </lineage>
</organism>
<gene>
    <name evidence="1" type="primary">tilS</name>
    <name type="ordered locus">BAB1_1704</name>
</gene>
<accession>Q2YQH6</accession>
<sequence length="448" mass="48606">MGLSPVNIFKPFGLGRAKAVIAAVSGGSDSLGLLFLLKDYLSTLESPPVLIAVTVDHKLRAESALEAENVGLLCQKHGIMHCVLSWDDPKPAHGLAAAARTARYRLLVQAARDAGAGFIVTGHTENDQIETFLMRKARSGHCEARGLAAMSPRSLLEGSVELARPLLTVSRQALRDELTRRGIAWVDDPSNANIDYERPRVRLGVAAEADGQEVLEQIAQAGAARERDNAALVEALADPATLGVDAAGMMFLNADCYAALSPGARQLFSGLLASIAGGRRFLPGDGERRRIERMLSGQDAPRRLTVFGALIERGEKGAPHRFRRERRNLPKLDLVPGQHIVWDGRFCFFNSGGRSFEIAPPGRQELIDFLKNSGRDIESRRCEALLISPALYEGGKLAFVPFLPGAEWPQGVHIERHFAIFDHVLPGHDFALAQAVEARLGRACAEIS</sequence>
<proteinExistence type="inferred from homology"/>